<reference key="1">
    <citation type="journal article" date="2008" name="PLoS ONE">
        <title>Survival in nuclear waste, extreme resistance, and potential applications gleaned from the genome sequence of Kineococcus radiotolerans SRS30216.</title>
        <authorList>
            <person name="Bagwell C.E."/>
            <person name="Bhat S."/>
            <person name="Hawkins G.M."/>
            <person name="Smith B.W."/>
            <person name="Biswas T."/>
            <person name="Hoover T.R."/>
            <person name="Saunders E."/>
            <person name="Han C.S."/>
            <person name="Tsodikov O.V."/>
            <person name="Shimkets L.J."/>
        </authorList>
    </citation>
    <scope>NUCLEOTIDE SEQUENCE [LARGE SCALE GENOMIC DNA]</scope>
    <source>
        <strain>ATCC BAA-149 / DSM 14245 / SRS30216</strain>
    </source>
</reference>
<proteinExistence type="inferred from homology"/>
<name>DNAK_KINRD</name>
<protein>
    <recommendedName>
        <fullName evidence="1">Chaperone protein DnaK</fullName>
    </recommendedName>
    <alternativeName>
        <fullName evidence="1">HSP70</fullName>
    </alternativeName>
    <alternativeName>
        <fullName evidence="1">Heat shock 70 kDa protein</fullName>
    </alternativeName>
    <alternativeName>
        <fullName evidence="1">Heat shock protein 70</fullName>
    </alternativeName>
</protein>
<comment type="function">
    <text evidence="1">Acts as a chaperone.</text>
</comment>
<comment type="induction">
    <text evidence="1">By stress conditions e.g. heat shock.</text>
</comment>
<comment type="similarity">
    <text evidence="1">Belongs to the heat shock protein 70 family.</text>
</comment>
<dbReference type="EMBL" id="CP000750">
    <property type="protein sequence ID" value="ABS05696.1"/>
    <property type="molecule type" value="Genomic_DNA"/>
</dbReference>
<dbReference type="RefSeq" id="WP_012086009.1">
    <property type="nucleotide sequence ID" value="NC_009664.2"/>
</dbReference>
<dbReference type="SMR" id="A6WFV7"/>
<dbReference type="STRING" id="266940.Krad_4233"/>
<dbReference type="KEGG" id="kra:Krad_4233"/>
<dbReference type="eggNOG" id="COG0443">
    <property type="taxonomic scope" value="Bacteria"/>
</dbReference>
<dbReference type="HOGENOM" id="CLU_005965_2_1_11"/>
<dbReference type="OrthoDB" id="9766019at2"/>
<dbReference type="Proteomes" id="UP000001116">
    <property type="component" value="Chromosome"/>
</dbReference>
<dbReference type="GO" id="GO:0005524">
    <property type="term" value="F:ATP binding"/>
    <property type="evidence" value="ECO:0007669"/>
    <property type="project" value="UniProtKB-UniRule"/>
</dbReference>
<dbReference type="GO" id="GO:0140662">
    <property type="term" value="F:ATP-dependent protein folding chaperone"/>
    <property type="evidence" value="ECO:0007669"/>
    <property type="project" value="InterPro"/>
</dbReference>
<dbReference type="GO" id="GO:0051082">
    <property type="term" value="F:unfolded protein binding"/>
    <property type="evidence" value="ECO:0007669"/>
    <property type="project" value="InterPro"/>
</dbReference>
<dbReference type="CDD" id="cd10234">
    <property type="entry name" value="ASKHA_NBD_HSP70_DnaK-like"/>
    <property type="match status" value="1"/>
</dbReference>
<dbReference type="FunFam" id="2.60.34.10:FF:000014">
    <property type="entry name" value="Chaperone protein DnaK HSP70"/>
    <property type="match status" value="1"/>
</dbReference>
<dbReference type="FunFam" id="1.20.1270.10:FF:000001">
    <property type="entry name" value="Molecular chaperone DnaK"/>
    <property type="match status" value="1"/>
</dbReference>
<dbReference type="FunFam" id="3.30.420.40:FF:000071">
    <property type="entry name" value="Molecular chaperone DnaK"/>
    <property type="match status" value="1"/>
</dbReference>
<dbReference type="FunFam" id="3.90.640.10:FF:000003">
    <property type="entry name" value="Molecular chaperone DnaK"/>
    <property type="match status" value="1"/>
</dbReference>
<dbReference type="Gene3D" id="1.20.1270.10">
    <property type="match status" value="1"/>
</dbReference>
<dbReference type="Gene3D" id="3.30.420.40">
    <property type="match status" value="2"/>
</dbReference>
<dbReference type="Gene3D" id="3.90.640.10">
    <property type="entry name" value="Actin, Chain A, domain 4"/>
    <property type="match status" value="1"/>
</dbReference>
<dbReference type="Gene3D" id="2.60.34.10">
    <property type="entry name" value="Substrate Binding Domain Of DNAk, Chain A, domain 1"/>
    <property type="match status" value="1"/>
</dbReference>
<dbReference type="HAMAP" id="MF_00332">
    <property type="entry name" value="DnaK"/>
    <property type="match status" value="1"/>
</dbReference>
<dbReference type="InterPro" id="IPR043129">
    <property type="entry name" value="ATPase_NBD"/>
</dbReference>
<dbReference type="InterPro" id="IPR012725">
    <property type="entry name" value="Chaperone_DnaK"/>
</dbReference>
<dbReference type="InterPro" id="IPR018181">
    <property type="entry name" value="Heat_shock_70_CS"/>
</dbReference>
<dbReference type="InterPro" id="IPR029048">
    <property type="entry name" value="HSP70_C_sf"/>
</dbReference>
<dbReference type="InterPro" id="IPR029047">
    <property type="entry name" value="HSP70_peptide-bd_sf"/>
</dbReference>
<dbReference type="InterPro" id="IPR013126">
    <property type="entry name" value="Hsp_70_fam"/>
</dbReference>
<dbReference type="NCBIfam" id="NF001413">
    <property type="entry name" value="PRK00290.1"/>
    <property type="match status" value="1"/>
</dbReference>
<dbReference type="NCBIfam" id="TIGR02350">
    <property type="entry name" value="prok_dnaK"/>
    <property type="match status" value="1"/>
</dbReference>
<dbReference type="PANTHER" id="PTHR19375">
    <property type="entry name" value="HEAT SHOCK PROTEIN 70KDA"/>
    <property type="match status" value="1"/>
</dbReference>
<dbReference type="Pfam" id="PF00012">
    <property type="entry name" value="HSP70"/>
    <property type="match status" value="1"/>
</dbReference>
<dbReference type="PRINTS" id="PR00301">
    <property type="entry name" value="HEATSHOCK70"/>
</dbReference>
<dbReference type="SUPFAM" id="SSF53067">
    <property type="entry name" value="Actin-like ATPase domain"/>
    <property type="match status" value="2"/>
</dbReference>
<dbReference type="SUPFAM" id="SSF100934">
    <property type="entry name" value="Heat shock protein 70kD (HSP70), C-terminal subdomain"/>
    <property type="match status" value="1"/>
</dbReference>
<dbReference type="SUPFAM" id="SSF100920">
    <property type="entry name" value="Heat shock protein 70kD (HSP70), peptide-binding domain"/>
    <property type="match status" value="1"/>
</dbReference>
<dbReference type="PROSITE" id="PS00297">
    <property type="entry name" value="HSP70_1"/>
    <property type="match status" value="1"/>
</dbReference>
<dbReference type="PROSITE" id="PS00329">
    <property type="entry name" value="HSP70_2"/>
    <property type="match status" value="1"/>
</dbReference>
<gene>
    <name evidence="1" type="primary">dnaK</name>
    <name type="ordered locus">Krad_4233</name>
</gene>
<accession>A6WFV7</accession>
<organism>
    <name type="scientific">Kineococcus radiotolerans (strain ATCC BAA-149 / DSM 14245 / SRS30216)</name>
    <dbReference type="NCBI Taxonomy" id="266940"/>
    <lineage>
        <taxon>Bacteria</taxon>
        <taxon>Bacillati</taxon>
        <taxon>Actinomycetota</taxon>
        <taxon>Actinomycetes</taxon>
        <taxon>Kineosporiales</taxon>
        <taxon>Kineosporiaceae</taxon>
        <taxon>Kineococcus</taxon>
    </lineage>
</organism>
<sequence>MARAVGIDLGTTNSVVSVLEGGEPTVIANAEGGRTTPSVVAFAKNGEVLVGEIAKRQAVTNIDRTVRSVKREVGTNWSTTIDDKKYTPQEISARVLQKLKRDAESYLGEAVTDAVITVPAYFNDAQRQATKEAGEIAGLNVLRIINEPTAAALAYGLEKGKEDELILVFDLGGGTFDVSLLEVGKDEDGFSTIQVRATSGDNHLGGDDWDQRVVDHLLKKVSSAYGIDLSKDKIAMQRLRESAEQAKKELSTATSTGISLQYLSMSENGPVHLDETLTRAQFEQMTQDLLDRTKKPFHDVIRDADVKLADIHHVVLVGGSTRMPAVTGVVKELLGGKEPNKGVNPDEVVAIGAALQAGVLKGERKDVLLIDVTPLSLGIETKGGIMTKLIERNTAIPTKRSEVFTTADDNQPSVLIQVFQGERELARDNKPLGTFELTGIAPAPRGVPQVEVTFDIDANGIVHVNAKDRGTGKEQSMTISGGSALSKEDIERMVKDAEQHANEDKQRREEAEARNQAEGLVYQTEKFVADNSDKLPEDGKAEVQAAVAELKTALAGTDAAEIKAKSDAVAQASQKLGAAMYAAQAEGGAAGDAGAQAGPDFTKPSASDEDVVDAEVVDDEKDK</sequence>
<evidence type="ECO:0000255" key="1">
    <source>
        <dbReference type="HAMAP-Rule" id="MF_00332"/>
    </source>
</evidence>
<evidence type="ECO:0000256" key="2">
    <source>
        <dbReference type="SAM" id="MobiDB-lite"/>
    </source>
</evidence>
<keyword id="KW-0067">ATP-binding</keyword>
<keyword id="KW-0143">Chaperone</keyword>
<keyword id="KW-0547">Nucleotide-binding</keyword>
<keyword id="KW-0597">Phosphoprotein</keyword>
<keyword id="KW-1185">Reference proteome</keyword>
<keyword id="KW-0346">Stress response</keyword>
<feature type="chain" id="PRO_1000079231" description="Chaperone protein DnaK">
    <location>
        <begin position="1"/>
        <end position="623"/>
    </location>
</feature>
<feature type="region of interest" description="Disordered" evidence="2">
    <location>
        <begin position="496"/>
        <end position="524"/>
    </location>
</feature>
<feature type="region of interest" description="Disordered" evidence="2">
    <location>
        <begin position="583"/>
        <end position="623"/>
    </location>
</feature>
<feature type="compositionally biased region" description="Basic and acidic residues" evidence="2">
    <location>
        <begin position="496"/>
        <end position="515"/>
    </location>
</feature>
<feature type="compositionally biased region" description="Low complexity" evidence="2">
    <location>
        <begin position="583"/>
        <end position="598"/>
    </location>
</feature>
<feature type="compositionally biased region" description="Acidic residues" evidence="2">
    <location>
        <begin position="607"/>
        <end position="623"/>
    </location>
</feature>
<feature type="modified residue" description="Phosphothreonine; by autocatalysis" evidence="1">
    <location>
        <position position="175"/>
    </location>
</feature>